<sequence>MRFDTVIMGGGLAGLLCGLQLQKHGLRCAIVTRGQSALHFSSGSLDLLSHLPDGQPVTDIHSGLESLRQQAPAHPYSLLEPQRVLDLACQAQALIAESGAQLQGSVELAHQRVTPLGTLRATWLSSPEVPVWPLPVKKICVVGISGLMDFQAHLAAASLRELDLSVETAEIELPELDVLRNNATEFRAVNIARFLDNEENWPLLLDALIPVANTCEMILMPACFGLADDKLWRWLNEKLPCSLMLLPTLPPSVLGIRLQNQLQRQFVRQGGVWMPGDEVKKVTCKNGVVNEIWTRNHADIPLRPRFAVLASGSFFSGGLVAERNGIREPILGLDVLQTATRGEWYKGDFFAPQPWQQFGVTTDETLRPSQAGQTIENLFAIGSVLGGFDPIAQGCGGGVCAVSALHAAQQIAQRAGGQQ</sequence>
<dbReference type="EC" id="1.1.5.3" evidence="1"/>
<dbReference type="EMBL" id="CP000800">
    <property type="protein sequence ID" value="ABV17511.1"/>
    <property type="molecule type" value="Genomic_DNA"/>
</dbReference>
<dbReference type="RefSeq" id="WP_001209926.1">
    <property type="nucleotide sequence ID" value="NC_009801.1"/>
</dbReference>
<dbReference type="KEGG" id="ecw:EcE24377A_2540"/>
<dbReference type="HOGENOM" id="CLU_047793_0_0_6"/>
<dbReference type="UniPathway" id="UPA00618">
    <property type="reaction ID" value="UER00673"/>
</dbReference>
<dbReference type="Proteomes" id="UP000001122">
    <property type="component" value="Chromosome"/>
</dbReference>
<dbReference type="GO" id="GO:0009331">
    <property type="term" value="C:glycerol-3-phosphate dehydrogenase (FAD) complex"/>
    <property type="evidence" value="ECO:0007669"/>
    <property type="project" value="InterPro"/>
</dbReference>
<dbReference type="GO" id="GO:0004368">
    <property type="term" value="F:glycerol-3-phosphate dehydrogenase (quinone) activity"/>
    <property type="evidence" value="ECO:0007669"/>
    <property type="project" value="UniProtKB-UniRule"/>
</dbReference>
<dbReference type="GO" id="GO:0009061">
    <property type="term" value="P:anaerobic respiration"/>
    <property type="evidence" value="ECO:0007669"/>
    <property type="project" value="TreeGrafter"/>
</dbReference>
<dbReference type="GO" id="GO:0019563">
    <property type="term" value="P:glycerol catabolic process"/>
    <property type="evidence" value="ECO:0007669"/>
    <property type="project" value="UniProtKB-UniRule"/>
</dbReference>
<dbReference type="GO" id="GO:0046168">
    <property type="term" value="P:glycerol-3-phosphate catabolic process"/>
    <property type="evidence" value="ECO:0007669"/>
    <property type="project" value="TreeGrafter"/>
</dbReference>
<dbReference type="Gene3D" id="3.50.50.60">
    <property type="entry name" value="FAD/NAD(P)-binding domain"/>
    <property type="match status" value="1"/>
</dbReference>
<dbReference type="HAMAP" id="MF_00753">
    <property type="entry name" value="Glycerol3P_GlpB"/>
    <property type="match status" value="1"/>
</dbReference>
<dbReference type="InterPro" id="IPR003953">
    <property type="entry name" value="FAD-dep_OxRdtase_2_FAD-bd"/>
</dbReference>
<dbReference type="InterPro" id="IPR050315">
    <property type="entry name" value="FAD-oxidoreductase_2"/>
</dbReference>
<dbReference type="InterPro" id="IPR036188">
    <property type="entry name" value="FAD/NAD-bd_sf"/>
</dbReference>
<dbReference type="InterPro" id="IPR009158">
    <property type="entry name" value="G3P_DH_GlpB_su"/>
</dbReference>
<dbReference type="NCBIfam" id="TIGR03378">
    <property type="entry name" value="glycerol3P_GlpB"/>
    <property type="match status" value="1"/>
</dbReference>
<dbReference type="NCBIfam" id="NF003718">
    <property type="entry name" value="PRK05329.1-1"/>
    <property type="match status" value="1"/>
</dbReference>
<dbReference type="NCBIfam" id="NF003719">
    <property type="entry name" value="PRK05329.1-2"/>
    <property type="match status" value="1"/>
</dbReference>
<dbReference type="NCBIfam" id="NF003720">
    <property type="entry name" value="PRK05329.1-3"/>
    <property type="match status" value="1"/>
</dbReference>
<dbReference type="NCBIfam" id="NF003721">
    <property type="entry name" value="PRK05329.1-4"/>
    <property type="match status" value="1"/>
</dbReference>
<dbReference type="PANTHER" id="PTHR43400:SF11">
    <property type="entry name" value="ANAEROBIC GLYCEROL-3-PHOSPHATE DEHYDROGENASE SUBUNIT B"/>
    <property type="match status" value="1"/>
</dbReference>
<dbReference type="PANTHER" id="PTHR43400">
    <property type="entry name" value="FUMARATE REDUCTASE"/>
    <property type="match status" value="1"/>
</dbReference>
<dbReference type="Pfam" id="PF00890">
    <property type="entry name" value="FAD_binding_2"/>
    <property type="match status" value="1"/>
</dbReference>
<dbReference type="PIRSF" id="PIRSF000141">
    <property type="entry name" value="Anaerobic_G3P_dh"/>
    <property type="match status" value="1"/>
</dbReference>
<dbReference type="SUPFAM" id="SSF51905">
    <property type="entry name" value="FAD/NAD(P)-binding domain"/>
    <property type="match status" value="1"/>
</dbReference>
<keyword id="KW-0285">Flavoprotein</keyword>
<keyword id="KW-0288">FMN</keyword>
<keyword id="KW-0560">Oxidoreductase</keyword>
<keyword id="KW-1185">Reference proteome</keyword>
<evidence type="ECO:0000255" key="1">
    <source>
        <dbReference type="HAMAP-Rule" id="MF_00753"/>
    </source>
</evidence>
<feature type="chain" id="PRO_1000062191" description="Anaerobic glycerol-3-phosphate dehydrogenase subunit B">
    <location>
        <begin position="1"/>
        <end position="419"/>
    </location>
</feature>
<name>GLPB_ECO24</name>
<protein>
    <recommendedName>
        <fullName evidence="1">Anaerobic glycerol-3-phosphate dehydrogenase subunit B</fullName>
        <shortName evidence="1">Anaerobic G-3-P dehydrogenase subunit B</shortName>
        <shortName evidence="1">Anaerobic G3Pdhase B</shortName>
        <ecNumber evidence="1">1.1.5.3</ecNumber>
    </recommendedName>
</protein>
<proteinExistence type="inferred from homology"/>
<organism>
    <name type="scientific">Escherichia coli O139:H28 (strain E24377A / ETEC)</name>
    <dbReference type="NCBI Taxonomy" id="331111"/>
    <lineage>
        <taxon>Bacteria</taxon>
        <taxon>Pseudomonadati</taxon>
        <taxon>Pseudomonadota</taxon>
        <taxon>Gammaproteobacteria</taxon>
        <taxon>Enterobacterales</taxon>
        <taxon>Enterobacteriaceae</taxon>
        <taxon>Escherichia</taxon>
    </lineage>
</organism>
<accession>A7ZP63</accession>
<reference key="1">
    <citation type="journal article" date="2008" name="J. Bacteriol.">
        <title>The pangenome structure of Escherichia coli: comparative genomic analysis of E. coli commensal and pathogenic isolates.</title>
        <authorList>
            <person name="Rasko D.A."/>
            <person name="Rosovitz M.J."/>
            <person name="Myers G.S.A."/>
            <person name="Mongodin E.F."/>
            <person name="Fricke W.F."/>
            <person name="Gajer P."/>
            <person name="Crabtree J."/>
            <person name="Sebaihia M."/>
            <person name="Thomson N.R."/>
            <person name="Chaudhuri R."/>
            <person name="Henderson I.R."/>
            <person name="Sperandio V."/>
            <person name="Ravel J."/>
        </authorList>
    </citation>
    <scope>NUCLEOTIDE SEQUENCE [LARGE SCALE GENOMIC DNA]</scope>
    <source>
        <strain>E24377A / ETEC</strain>
    </source>
</reference>
<comment type="function">
    <text evidence="1">Conversion of glycerol 3-phosphate to dihydroxyacetone. Uses fumarate or nitrate as electron acceptor.</text>
</comment>
<comment type="catalytic activity">
    <reaction evidence="1">
        <text>a quinone + sn-glycerol 3-phosphate = dihydroxyacetone phosphate + a quinol</text>
        <dbReference type="Rhea" id="RHEA:18977"/>
        <dbReference type="ChEBI" id="CHEBI:24646"/>
        <dbReference type="ChEBI" id="CHEBI:57597"/>
        <dbReference type="ChEBI" id="CHEBI:57642"/>
        <dbReference type="ChEBI" id="CHEBI:132124"/>
        <dbReference type="EC" id="1.1.5.3"/>
    </reaction>
</comment>
<comment type="cofactor">
    <cofactor evidence="1">
        <name>FMN</name>
        <dbReference type="ChEBI" id="CHEBI:58210"/>
    </cofactor>
</comment>
<comment type="pathway">
    <text evidence="1">Polyol metabolism; glycerol degradation via glycerol kinase pathway; glycerone phosphate from sn-glycerol 3-phosphate (anaerobic route): step 1/1.</text>
</comment>
<comment type="subunit">
    <text evidence="1">Composed of a catalytic GlpA/B dimer and of membrane bound GlpC.</text>
</comment>
<comment type="similarity">
    <text evidence="1">Belongs to the anaerobic G-3-P dehydrogenase subunit B family.</text>
</comment>
<gene>
    <name evidence="1" type="primary">glpB</name>
    <name type="ordered locus">EcE24377A_2540</name>
</gene>